<gene>
    <name type="primary">ymgJ</name>
    <name type="ordered locus">ECP_1213</name>
</gene>
<feature type="chain" id="PRO_0000311781" description="Uncharacterized protein YmgJ">
    <location>
        <begin position="1"/>
        <end position="61"/>
    </location>
</feature>
<dbReference type="EMBL" id="CP000247">
    <property type="protein sequence ID" value="ABG69224.1"/>
    <property type="molecule type" value="Genomic_DNA"/>
</dbReference>
<dbReference type="RefSeq" id="WP_001331738.1">
    <property type="nucleotide sequence ID" value="NC_008253.1"/>
</dbReference>
<dbReference type="KEGG" id="ecp:ECP_1213"/>
<dbReference type="HOGENOM" id="CLU_205185_0_0_6"/>
<dbReference type="Proteomes" id="UP000009182">
    <property type="component" value="Chromosome"/>
</dbReference>
<protein>
    <recommendedName>
        <fullName>Uncharacterized protein YmgJ</fullName>
    </recommendedName>
</protein>
<proteinExistence type="predicted"/>
<organism>
    <name type="scientific">Escherichia coli O6:K15:H31 (strain 536 / UPEC)</name>
    <dbReference type="NCBI Taxonomy" id="362663"/>
    <lineage>
        <taxon>Bacteria</taxon>
        <taxon>Pseudomonadati</taxon>
        <taxon>Pseudomonadota</taxon>
        <taxon>Gammaproteobacteria</taxon>
        <taxon>Enterobacterales</taxon>
        <taxon>Enterobacteriaceae</taxon>
        <taxon>Escherichia</taxon>
    </lineage>
</organism>
<sequence>MSRRYSLATITLVILFCGRPHCRKISVRQYYQKRVIFYPTTLQRTAFKKYLFLIRDIIISS</sequence>
<reference key="1">
    <citation type="journal article" date="2006" name="Mol. Microbiol.">
        <title>Role of pathogenicity island-associated integrases in the genome plasticity of uropathogenic Escherichia coli strain 536.</title>
        <authorList>
            <person name="Hochhut B."/>
            <person name="Wilde C."/>
            <person name="Balling G."/>
            <person name="Middendorf B."/>
            <person name="Dobrindt U."/>
            <person name="Brzuszkiewicz E."/>
            <person name="Gottschalk G."/>
            <person name="Carniel E."/>
            <person name="Hacker J."/>
        </authorList>
    </citation>
    <scope>NUCLEOTIDE SEQUENCE [LARGE SCALE GENOMIC DNA]</scope>
    <source>
        <strain>536 / UPEC</strain>
    </source>
</reference>
<name>YMGJ_ECOL5</name>
<accession>Q0TIK5</accession>